<reference key="1">
    <citation type="book" date="2006" name="Gram positive pathogens, 2nd edition">
        <title>The Staphylococcus aureus NCTC 8325 genome.</title>
        <editorList>
            <person name="Fischetti V."/>
            <person name="Novick R."/>
            <person name="Ferretti J."/>
            <person name="Portnoy D."/>
            <person name="Rood J."/>
        </editorList>
        <authorList>
            <person name="Gillaspy A.F."/>
            <person name="Worrell V."/>
            <person name="Orvis J."/>
            <person name="Roe B.A."/>
            <person name="Dyer D.W."/>
            <person name="Iandolo J.J."/>
        </authorList>
    </citation>
    <scope>NUCLEOTIDE SEQUENCE [LARGE SCALE GENOMIC DNA]</scope>
    <source>
        <strain>NCTC 8325 / PS 47</strain>
    </source>
</reference>
<name>Y535_STAA8</name>
<accession>Q2G0M5</accession>
<feature type="chain" id="PRO_0000270843" description="Uncharacterized epimerase/dehydratase SAOUHSC_00535">
    <location>
        <begin position="1"/>
        <end position="321"/>
    </location>
</feature>
<proteinExistence type="inferred from homology"/>
<comment type="similarity">
    <text evidence="1">Belongs to the NAD(P)-dependent epimerase/dehydratase family.</text>
</comment>
<keyword id="KW-1185">Reference proteome</keyword>
<evidence type="ECO:0000305" key="1"/>
<dbReference type="EMBL" id="CP000253">
    <property type="protein sequence ID" value="ABD29683.1"/>
    <property type="molecule type" value="Genomic_DNA"/>
</dbReference>
<dbReference type="RefSeq" id="WP_000723301.1">
    <property type="nucleotide sequence ID" value="NZ_LS483365.1"/>
</dbReference>
<dbReference type="RefSeq" id="YP_499107.1">
    <property type="nucleotide sequence ID" value="NC_007795.1"/>
</dbReference>
<dbReference type="SMR" id="Q2G0M5"/>
<dbReference type="STRING" id="93061.SAOUHSC_00535"/>
<dbReference type="PaxDb" id="1280-SAXN108_0607"/>
<dbReference type="GeneID" id="3920815"/>
<dbReference type="KEGG" id="sao:SAOUHSC_00535"/>
<dbReference type="PATRIC" id="fig|93061.5.peg.481"/>
<dbReference type="eggNOG" id="COG0451">
    <property type="taxonomic scope" value="Bacteria"/>
</dbReference>
<dbReference type="HOGENOM" id="CLU_007383_19_1_9"/>
<dbReference type="OrthoDB" id="9779902at2"/>
<dbReference type="PRO" id="PR:Q2G0M5"/>
<dbReference type="Proteomes" id="UP000008816">
    <property type="component" value="Chromosome"/>
</dbReference>
<dbReference type="GO" id="GO:0008743">
    <property type="term" value="F:L-threonine 3-dehydrogenase activity"/>
    <property type="evidence" value="ECO:0000318"/>
    <property type="project" value="GO_Central"/>
</dbReference>
<dbReference type="GO" id="GO:0006567">
    <property type="term" value="P:threonine catabolic process"/>
    <property type="evidence" value="ECO:0000318"/>
    <property type="project" value="GO_Central"/>
</dbReference>
<dbReference type="FunFam" id="3.40.50.720:FF:000077">
    <property type="entry name" value="L-threonine 3-dehydrogenase, mitochondrial"/>
    <property type="match status" value="1"/>
</dbReference>
<dbReference type="Gene3D" id="3.40.50.720">
    <property type="entry name" value="NAD(P)-binding Rossmann-like Domain"/>
    <property type="match status" value="1"/>
</dbReference>
<dbReference type="InterPro" id="IPR001509">
    <property type="entry name" value="Epimerase_deHydtase"/>
</dbReference>
<dbReference type="InterPro" id="IPR036291">
    <property type="entry name" value="NAD(P)-bd_dom_sf"/>
</dbReference>
<dbReference type="InterPro" id="IPR051225">
    <property type="entry name" value="NAD(P)_epim/dehydratase"/>
</dbReference>
<dbReference type="PANTHER" id="PTHR42687">
    <property type="entry name" value="L-THREONINE 3-DEHYDROGENASE"/>
    <property type="match status" value="1"/>
</dbReference>
<dbReference type="PANTHER" id="PTHR42687:SF1">
    <property type="entry name" value="L-THREONINE 3-DEHYDROGENASE, MITOCHONDRIAL"/>
    <property type="match status" value="1"/>
</dbReference>
<dbReference type="Pfam" id="PF01370">
    <property type="entry name" value="Epimerase"/>
    <property type="match status" value="1"/>
</dbReference>
<dbReference type="SUPFAM" id="SSF51735">
    <property type="entry name" value="NAD(P)-binding Rossmann-fold domains"/>
    <property type="match status" value="1"/>
</dbReference>
<gene>
    <name type="ordered locus">SAOUHSC_00535</name>
</gene>
<sequence length="321" mass="36053">MKKIMITGALGQIGTELVVKCREIYGTDNVLATDIREPEADSPVQNGPFEILDVTDRDRMFELVRDFEADSLMHMAALLSATAEKNPILAWDLNMGGLMNALEAARTYNLHFFTPSSIGAFGDSTPKVNTPQVTIQQPTTMYGVNKVAGELLCQYYFKRFGVDTRSVRFPGLISHVKEPGGGTTDYAVEIYFKAVREGHYTSFIDKGTYMDMMYMDDAIEAIIKLMEADDAKLETRNGYNLSAMSFDPEMVKEAIQEYYPNFTLDYDVDPIRQGIANSWPDSIDTSCSRGEWGFDPKYDLASMTKLMLEAIEQKDTVKNNN</sequence>
<organism>
    <name type="scientific">Staphylococcus aureus (strain NCTC 8325 / PS 47)</name>
    <dbReference type="NCBI Taxonomy" id="93061"/>
    <lineage>
        <taxon>Bacteria</taxon>
        <taxon>Bacillati</taxon>
        <taxon>Bacillota</taxon>
        <taxon>Bacilli</taxon>
        <taxon>Bacillales</taxon>
        <taxon>Staphylococcaceae</taxon>
        <taxon>Staphylococcus</taxon>
    </lineage>
</organism>
<protein>
    <recommendedName>
        <fullName>Uncharacterized epimerase/dehydratase SAOUHSC_00535</fullName>
    </recommendedName>
</protein>